<keyword id="KW-0028">Amino-acid biosynthesis</keyword>
<keyword id="KW-0057">Aromatic amino acid biosynthesis</keyword>
<keyword id="KW-0067">ATP-binding</keyword>
<keyword id="KW-0963">Cytoplasm</keyword>
<keyword id="KW-0418">Kinase</keyword>
<keyword id="KW-0460">Magnesium</keyword>
<keyword id="KW-0479">Metal-binding</keyword>
<keyword id="KW-0547">Nucleotide-binding</keyword>
<keyword id="KW-1185">Reference proteome</keyword>
<keyword id="KW-0808">Transferase</keyword>
<accession>Q2G733</accession>
<name>AROK_NOVAD</name>
<protein>
    <recommendedName>
        <fullName evidence="1">Shikimate kinase</fullName>
        <shortName evidence="1">SK</shortName>
        <ecNumber evidence="1">2.7.1.71</ecNumber>
    </recommendedName>
</protein>
<reference key="1">
    <citation type="submission" date="2006-01" db="EMBL/GenBank/DDBJ databases">
        <title>Complete sequence of Novosphingobium aromaticivorans DSM 12444.</title>
        <authorList>
            <consortium name="US DOE Joint Genome Institute"/>
            <person name="Copeland A."/>
            <person name="Lucas S."/>
            <person name="Lapidus A."/>
            <person name="Barry K."/>
            <person name="Detter J.C."/>
            <person name="Glavina T."/>
            <person name="Hammon N."/>
            <person name="Israni S."/>
            <person name="Pitluck S."/>
            <person name="Chain P."/>
            <person name="Malfatti S."/>
            <person name="Shin M."/>
            <person name="Vergez L."/>
            <person name="Schmutz J."/>
            <person name="Larimer F."/>
            <person name="Land M."/>
            <person name="Kyrpides N."/>
            <person name="Ivanova N."/>
            <person name="Fredrickson J."/>
            <person name="Balkwill D."/>
            <person name="Romine M.F."/>
            <person name="Richardson P."/>
        </authorList>
    </citation>
    <scope>NUCLEOTIDE SEQUENCE [LARGE SCALE GENOMIC DNA]</scope>
    <source>
        <strain>ATCC 700278 / DSM 12444 / CCUG 56034 / CIP 105152 / NBRC 16084 / F199</strain>
    </source>
</reference>
<proteinExistence type="inferred from homology"/>
<sequence length="193" mass="21465">MEHDAALLSSSEIDRIGRRIGRPLVLVGMMGVGKTTVGRKLASLLHVPFVDADEEIERAAHMPIPEIFATYGEPYFRDGERRVIARLMGTGRNTDRKVLSTGGGAFCDPATRALILERGIAVWLDSDVDTLVERVGRKDNRPLLKTGNPREILTRLKDEREPFYAQAPIHMTSGAQPHQVTASKILRAIDQWL</sequence>
<feature type="chain" id="PRO_0000237902" description="Shikimate kinase">
    <location>
        <begin position="1"/>
        <end position="193"/>
    </location>
</feature>
<feature type="binding site" evidence="1">
    <location>
        <begin position="31"/>
        <end position="36"/>
    </location>
    <ligand>
        <name>ATP</name>
        <dbReference type="ChEBI" id="CHEBI:30616"/>
    </ligand>
</feature>
<feature type="binding site" evidence="1">
    <location>
        <position position="35"/>
    </location>
    <ligand>
        <name>Mg(2+)</name>
        <dbReference type="ChEBI" id="CHEBI:18420"/>
    </ligand>
</feature>
<feature type="binding site" evidence="1">
    <location>
        <position position="53"/>
    </location>
    <ligand>
        <name>substrate</name>
    </ligand>
</feature>
<feature type="binding site" evidence="1">
    <location>
        <position position="77"/>
    </location>
    <ligand>
        <name>substrate</name>
    </ligand>
</feature>
<feature type="binding site" evidence="1">
    <location>
        <position position="103"/>
    </location>
    <ligand>
        <name>substrate</name>
    </ligand>
</feature>
<feature type="binding site" evidence="1">
    <location>
        <position position="141"/>
    </location>
    <ligand>
        <name>ATP</name>
        <dbReference type="ChEBI" id="CHEBI:30616"/>
    </ligand>
</feature>
<feature type="binding site" evidence="1">
    <location>
        <position position="160"/>
    </location>
    <ligand>
        <name>substrate</name>
    </ligand>
</feature>
<feature type="binding site" evidence="1">
    <location>
        <position position="176"/>
    </location>
    <ligand>
        <name>ATP</name>
        <dbReference type="ChEBI" id="CHEBI:30616"/>
    </ligand>
</feature>
<dbReference type="EC" id="2.7.1.71" evidence="1"/>
<dbReference type="EMBL" id="CP000248">
    <property type="protein sequence ID" value="ABD26340.1"/>
    <property type="status" value="ALT_INIT"/>
    <property type="molecule type" value="Genomic_DNA"/>
</dbReference>
<dbReference type="RefSeq" id="WP_041550271.1">
    <property type="nucleotide sequence ID" value="NC_007794.1"/>
</dbReference>
<dbReference type="SMR" id="Q2G733"/>
<dbReference type="STRING" id="279238.Saro_1900"/>
<dbReference type="KEGG" id="nar:Saro_1900"/>
<dbReference type="eggNOG" id="COG0703">
    <property type="taxonomic scope" value="Bacteria"/>
</dbReference>
<dbReference type="HOGENOM" id="CLU_057607_2_0_5"/>
<dbReference type="UniPathway" id="UPA00053">
    <property type="reaction ID" value="UER00088"/>
</dbReference>
<dbReference type="Proteomes" id="UP000009134">
    <property type="component" value="Chromosome"/>
</dbReference>
<dbReference type="GO" id="GO:0005829">
    <property type="term" value="C:cytosol"/>
    <property type="evidence" value="ECO:0007669"/>
    <property type="project" value="TreeGrafter"/>
</dbReference>
<dbReference type="GO" id="GO:0005524">
    <property type="term" value="F:ATP binding"/>
    <property type="evidence" value="ECO:0007669"/>
    <property type="project" value="UniProtKB-UniRule"/>
</dbReference>
<dbReference type="GO" id="GO:0000287">
    <property type="term" value="F:magnesium ion binding"/>
    <property type="evidence" value="ECO:0007669"/>
    <property type="project" value="UniProtKB-UniRule"/>
</dbReference>
<dbReference type="GO" id="GO:0004765">
    <property type="term" value="F:shikimate kinase activity"/>
    <property type="evidence" value="ECO:0007669"/>
    <property type="project" value="UniProtKB-UniRule"/>
</dbReference>
<dbReference type="GO" id="GO:0008652">
    <property type="term" value="P:amino acid biosynthetic process"/>
    <property type="evidence" value="ECO:0007669"/>
    <property type="project" value="UniProtKB-KW"/>
</dbReference>
<dbReference type="GO" id="GO:0009073">
    <property type="term" value="P:aromatic amino acid family biosynthetic process"/>
    <property type="evidence" value="ECO:0007669"/>
    <property type="project" value="UniProtKB-KW"/>
</dbReference>
<dbReference type="GO" id="GO:0009423">
    <property type="term" value="P:chorismate biosynthetic process"/>
    <property type="evidence" value="ECO:0007669"/>
    <property type="project" value="UniProtKB-UniRule"/>
</dbReference>
<dbReference type="CDD" id="cd00464">
    <property type="entry name" value="SK"/>
    <property type="match status" value="1"/>
</dbReference>
<dbReference type="Gene3D" id="3.40.50.300">
    <property type="entry name" value="P-loop containing nucleotide triphosphate hydrolases"/>
    <property type="match status" value="1"/>
</dbReference>
<dbReference type="HAMAP" id="MF_00109">
    <property type="entry name" value="Shikimate_kinase"/>
    <property type="match status" value="1"/>
</dbReference>
<dbReference type="InterPro" id="IPR027417">
    <property type="entry name" value="P-loop_NTPase"/>
</dbReference>
<dbReference type="InterPro" id="IPR031322">
    <property type="entry name" value="Shikimate/glucono_kinase"/>
</dbReference>
<dbReference type="InterPro" id="IPR000623">
    <property type="entry name" value="Shikimate_kinase/TSH1"/>
</dbReference>
<dbReference type="NCBIfam" id="NF010552">
    <property type="entry name" value="PRK13946.1"/>
    <property type="match status" value="1"/>
</dbReference>
<dbReference type="PANTHER" id="PTHR21087">
    <property type="entry name" value="SHIKIMATE KINASE"/>
    <property type="match status" value="1"/>
</dbReference>
<dbReference type="PANTHER" id="PTHR21087:SF16">
    <property type="entry name" value="SHIKIMATE KINASE 1, CHLOROPLASTIC"/>
    <property type="match status" value="1"/>
</dbReference>
<dbReference type="Pfam" id="PF01202">
    <property type="entry name" value="SKI"/>
    <property type="match status" value="1"/>
</dbReference>
<dbReference type="PRINTS" id="PR01100">
    <property type="entry name" value="SHIKIMTKNASE"/>
</dbReference>
<dbReference type="SUPFAM" id="SSF52540">
    <property type="entry name" value="P-loop containing nucleoside triphosphate hydrolases"/>
    <property type="match status" value="1"/>
</dbReference>
<organism>
    <name type="scientific">Novosphingobium aromaticivorans (strain ATCC 700278 / DSM 12444 / CCUG 56034 / CIP 105152 / NBRC 16084 / F199)</name>
    <dbReference type="NCBI Taxonomy" id="279238"/>
    <lineage>
        <taxon>Bacteria</taxon>
        <taxon>Pseudomonadati</taxon>
        <taxon>Pseudomonadota</taxon>
        <taxon>Alphaproteobacteria</taxon>
        <taxon>Sphingomonadales</taxon>
        <taxon>Sphingomonadaceae</taxon>
        <taxon>Novosphingobium</taxon>
    </lineage>
</organism>
<gene>
    <name evidence="1" type="primary">aroK</name>
    <name type="ordered locus">Saro_1900</name>
</gene>
<comment type="function">
    <text evidence="1">Catalyzes the specific phosphorylation of the 3-hydroxyl group of shikimic acid using ATP as a cosubstrate.</text>
</comment>
<comment type="catalytic activity">
    <reaction evidence="1">
        <text>shikimate + ATP = 3-phosphoshikimate + ADP + H(+)</text>
        <dbReference type="Rhea" id="RHEA:13121"/>
        <dbReference type="ChEBI" id="CHEBI:15378"/>
        <dbReference type="ChEBI" id="CHEBI:30616"/>
        <dbReference type="ChEBI" id="CHEBI:36208"/>
        <dbReference type="ChEBI" id="CHEBI:145989"/>
        <dbReference type="ChEBI" id="CHEBI:456216"/>
        <dbReference type="EC" id="2.7.1.71"/>
    </reaction>
</comment>
<comment type="cofactor">
    <cofactor evidence="1">
        <name>Mg(2+)</name>
        <dbReference type="ChEBI" id="CHEBI:18420"/>
    </cofactor>
    <text evidence="1">Binds 1 Mg(2+) ion per subunit.</text>
</comment>
<comment type="pathway">
    <text evidence="1">Metabolic intermediate biosynthesis; chorismate biosynthesis; chorismate from D-erythrose 4-phosphate and phosphoenolpyruvate: step 5/7.</text>
</comment>
<comment type="subunit">
    <text evidence="1">Monomer.</text>
</comment>
<comment type="subcellular location">
    <subcellularLocation>
        <location evidence="1">Cytoplasm</location>
    </subcellularLocation>
</comment>
<comment type="similarity">
    <text evidence="1">Belongs to the shikimate kinase family.</text>
</comment>
<comment type="sequence caution" evidence="2">
    <conflict type="erroneous initiation">
        <sequence resource="EMBL-CDS" id="ABD26340"/>
    </conflict>
</comment>
<evidence type="ECO:0000255" key="1">
    <source>
        <dbReference type="HAMAP-Rule" id="MF_00109"/>
    </source>
</evidence>
<evidence type="ECO:0000305" key="2"/>